<dbReference type="EMBL" id="AE000790">
    <property type="protein sequence ID" value="AAC66244.1"/>
    <property type="molecule type" value="Genomic_DNA"/>
</dbReference>
<dbReference type="PIR" id="A70210">
    <property type="entry name" value="A70210"/>
</dbReference>
<dbReference type="RefSeq" id="NP_045698.1">
    <property type="nucleotide sequence ID" value="NC_001857.2"/>
</dbReference>
<dbReference type="RefSeq" id="WP_010890381.1">
    <property type="nucleotide sequence ID" value="NC_001857.2"/>
</dbReference>
<dbReference type="PDB" id="2MVG">
    <property type="method" value="NMR"/>
    <property type="chains" value="A=22-187"/>
</dbReference>
<dbReference type="PDBsum" id="2MVG"/>
<dbReference type="BMRB" id="P0CL68"/>
<dbReference type="SMR" id="P0CL68"/>
<dbReference type="EnsemblBacteria" id="AAC66244">
    <property type="protein sequence ID" value="AAC66244"/>
    <property type="gene ID" value="BB_A25"/>
</dbReference>
<dbReference type="KEGG" id="bbu:BB_A25"/>
<dbReference type="PATRIC" id="fig|224326.49.peg.1542"/>
<dbReference type="HOGENOM" id="CLU_124841_0_0_12"/>
<dbReference type="OrthoDB" id="352280at2"/>
<dbReference type="EvolutionaryTrace" id="P0CL68"/>
<dbReference type="Proteomes" id="UP000001807">
    <property type="component" value="Plasmid lp54"/>
</dbReference>
<dbReference type="Gene3D" id="1.20.1420.40">
    <property type="entry name" value="Decorin-binding protein"/>
    <property type="match status" value="1"/>
</dbReference>
<dbReference type="InterPro" id="IPR003332">
    <property type="entry name" value="Decorin-bd"/>
</dbReference>
<dbReference type="InterPro" id="IPR053514">
    <property type="entry name" value="Decorin-Binding"/>
</dbReference>
<dbReference type="InterPro" id="IPR038353">
    <property type="entry name" value="Decorin-db_sf"/>
</dbReference>
<dbReference type="NCBIfam" id="NF033720">
    <property type="entry name" value="DbpB"/>
    <property type="match status" value="1"/>
</dbReference>
<dbReference type="Pfam" id="PF02352">
    <property type="entry name" value="Decorin_bind"/>
    <property type="match status" value="1"/>
</dbReference>
<comment type="function">
    <text evidence="1">Binds to decorin which may mediate the adherence of B.burgdorferi to collagen fibers in skin and other tissues.</text>
</comment>
<comment type="similarity">
    <text evidence="3">Belongs to the decorin-binding protein family.</text>
</comment>
<accession>P0CL68</accession>
<accession>O50918</accession>
<accession>O52611</accession>
<geneLocation type="plasmid">
    <name>lp54</name>
</geneLocation>
<protein>
    <recommendedName>
        <fullName>Decorin-binding protein B</fullName>
    </recommendedName>
</protein>
<name>DBPB_BORBU</name>
<evidence type="ECO:0000250" key="1"/>
<evidence type="ECO:0000255" key="2"/>
<evidence type="ECO:0000305" key="3"/>
<evidence type="ECO:0007829" key="4">
    <source>
        <dbReference type="PDB" id="2MVG"/>
    </source>
</evidence>
<reference key="1">
    <citation type="journal article" date="1997" name="Nature">
        <title>Genomic sequence of a Lyme disease spirochaete, Borrelia burgdorferi.</title>
        <authorList>
            <person name="Fraser C.M."/>
            <person name="Casjens S."/>
            <person name="Huang W.M."/>
            <person name="Sutton G.G."/>
            <person name="Clayton R.A."/>
            <person name="Lathigra R."/>
            <person name="White O."/>
            <person name="Ketchum K.A."/>
            <person name="Dodson R.J."/>
            <person name="Hickey E.K."/>
            <person name="Gwinn M.L."/>
            <person name="Dougherty B.A."/>
            <person name="Tomb J.-F."/>
            <person name="Fleischmann R.D."/>
            <person name="Richardson D.L."/>
            <person name="Peterson J.D."/>
            <person name="Kerlavage A.R."/>
            <person name="Quackenbush J."/>
            <person name="Salzberg S.L."/>
            <person name="Hanson M."/>
            <person name="van Vugt R."/>
            <person name="Palmer N."/>
            <person name="Adams M.D."/>
            <person name="Gocayne J.D."/>
            <person name="Weidman J.F."/>
            <person name="Utterback T.R."/>
            <person name="Watthey L."/>
            <person name="McDonald L.A."/>
            <person name="Artiach P."/>
            <person name="Bowman C."/>
            <person name="Garland S.A."/>
            <person name="Fujii C."/>
            <person name="Cotton M.D."/>
            <person name="Horst K."/>
            <person name="Roberts K.M."/>
            <person name="Hatch B."/>
            <person name="Smith H.O."/>
            <person name="Venter J.C."/>
        </authorList>
    </citation>
    <scope>NUCLEOTIDE SEQUENCE [LARGE SCALE GENOMIC DNA]</scope>
    <source>
        <strain>ATCC 35210 / DSM 4680 / CIP 102532 / B31</strain>
    </source>
</reference>
<sequence>MKIGKLNSIVIALFFKLLVACSIGLVERTNAALESSSKDLKNKILKIKKEATGKGVLFEAFTGLKTGSKVTSGGLALREAKVQAIVETGKFLKIIEEEALKLKETGNSGQFLAMFDLMLEVVESLEDVGIIGLKARVLEESKNNPINTAERLLAAKAQIENQLKVVKEKQNIENGGEKKNNKSKKKK</sequence>
<gene>
    <name type="primary">dbpB</name>
    <name type="ordered locus">BB_A25</name>
</gene>
<keyword id="KW-0002">3D-structure</keyword>
<keyword id="KW-0614">Plasmid</keyword>
<keyword id="KW-1185">Reference proteome</keyword>
<keyword id="KW-0732">Signal</keyword>
<proteinExistence type="evidence at protein level"/>
<feature type="signal peptide" evidence="2">
    <location>
        <begin position="1"/>
        <end position="20"/>
    </location>
</feature>
<feature type="chain" id="PRO_0000021075" description="Decorin-binding protein B">
    <location>
        <begin position="21"/>
        <end position="187"/>
    </location>
</feature>
<feature type="turn" evidence="4">
    <location>
        <begin position="27"/>
        <end position="31"/>
    </location>
</feature>
<feature type="helix" evidence="4">
    <location>
        <begin position="34"/>
        <end position="53"/>
    </location>
</feature>
<feature type="turn" evidence="4">
    <location>
        <begin position="70"/>
        <end position="74"/>
    </location>
</feature>
<feature type="helix" evidence="4">
    <location>
        <begin position="75"/>
        <end position="102"/>
    </location>
</feature>
<feature type="turn" evidence="4">
    <location>
        <begin position="103"/>
        <end position="105"/>
    </location>
</feature>
<feature type="helix" evidence="4">
    <location>
        <begin position="108"/>
        <end position="120"/>
    </location>
</feature>
<feature type="turn" evidence="4">
    <location>
        <begin position="121"/>
        <end position="123"/>
    </location>
</feature>
<feature type="helix" evidence="4">
    <location>
        <begin position="124"/>
        <end position="128"/>
    </location>
</feature>
<feature type="helix" evidence="4">
    <location>
        <begin position="134"/>
        <end position="143"/>
    </location>
</feature>
<feature type="helix" evidence="4">
    <location>
        <begin position="150"/>
        <end position="167"/>
    </location>
</feature>
<feature type="helix" evidence="4">
    <location>
        <begin position="168"/>
        <end position="171"/>
    </location>
</feature>
<feature type="strand" evidence="4">
    <location>
        <begin position="174"/>
        <end position="178"/>
    </location>
</feature>
<organism>
    <name type="scientific">Borreliella burgdorferi (strain ATCC 35210 / DSM 4680 / CIP 102532 / B31)</name>
    <name type="common">Borrelia burgdorferi</name>
    <dbReference type="NCBI Taxonomy" id="224326"/>
    <lineage>
        <taxon>Bacteria</taxon>
        <taxon>Pseudomonadati</taxon>
        <taxon>Spirochaetota</taxon>
        <taxon>Spirochaetia</taxon>
        <taxon>Spirochaetales</taxon>
        <taxon>Borreliaceae</taxon>
        <taxon>Borreliella</taxon>
    </lineage>
</organism>